<proteinExistence type="evidence at transcript level"/>
<protein>
    <recommendedName>
        <fullName>Peroxisomal targeting signal 1 receptor</fullName>
        <shortName>PTS1 receptor</shortName>
        <shortName>PTS1R</shortName>
    </recommendedName>
    <alternativeName>
        <fullName>PTS1-BP</fullName>
    </alternativeName>
    <alternativeName>
        <fullName>Peroxin-5</fullName>
    </alternativeName>
    <alternativeName>
        <fullName>Peroxisomal C-terminal targeting signal import receptor</fullName>
    </alternativeName>
    <alternativeName>
        <fullName>Peroxisome receptor 1</fullName>
    </alternativeName>
</protein>
<organism>
    <name type="scientific">Gallus gallus</name>
    <name type="common">Chicken</name>
    <dbReference type="NCBI Taxonomy" id="9031"/>
    <lineage>
        <taxon>Eukaryota</taxon>
        <taxon>Metazoa</taxon>
        <taxon>Chordata</taxon>
        <taxon>Craniata</taxon>
        <taxon>Vertebrata</taxon>
        <taxon>Euteleostomi</taxon>
        <taxon>Archelosauria</taxon>
        <taxon>Archosauria</taxon>
        <taxon>Dinosauria</taxon>
        <taxon>Saurischia</taxon>
        <taxon>Theropoda</taxon>
        <taxon>Coelurosauria</taxon>
        <taxon>Aves</taxon>
        <taxon>Neognathae</taxon>
        <taxon>Galloanserae</taxon>
        <taxon>Galliformes</taxon>
        <taxon>Phasianidae</taxon>
        <taxon>Phasianinae</taxon>
        <taxon>Gallus</taxon>
    </lineage>
</organism>
<keyword id="KW-0963">Cytoplasm</keyword>
<keyword id="KW-1017">Isopeptide bond</keyword>
<keyword id="KW-0576">Peroxisome</keyword>
<keyword id="KW-0653">Protein transport</keyword>
<keyword id="KW-1185">Reference proteome</keyword>
<keyword id="KW-0677">Repeat</keyword>
<keyword id="KW-0882">Thioester bond</keyword>
<keyword id="KW-0802">TPR repeat</keyword>
<keyword id="KW-0811">Translocation</keyword>
<keyword id="KW-0813">Transport</keyword>
<keyword id="KW-0832">Ubl conjugation</keyword>
<gene>
    <name type="primary">PEX5</name>
    <name type="ORF">RCJMB04_1g17</name>
</gene>
<comment type="function">
    <text evidence="1">Receptor that mediates peroxisomal import of proteins containing a C-terminal PTS1-type tripeptide peroxisomal targeting signal (SKL-type). Binds to cargo proteins containing a PTS1 peroxisomal targeting signal in the cytosol, and translocates them into the peroxisome matrix by passing through the PEX13-PEX14 docking complex along with cargo proteins. PEX5 receptor is then retrotranslocated into the cytosol, leading to release of bound cargo in the peroxisome matrix, and reset for a subsequent peroxisome import cycle.</text>
</comment>
<comment type="function">
    <text evidence="3">In addition to promoting peroxisomal translocation of proteins containing a PTS1 peroxisomal targeting signal, mediates peroxisomal import of proteins containing a C-terminal PTS2-type peroxisomal targeting signal via its interaction with PEX7. Interaction with PEX7 only takes place when PEX7 is associated with cargo proteins containing a PTS2 peroxisomal targeting signal. PEX7 along with PTS2-containing cargo proteins are then translocated through the PEX13-PEX14 docking complex together with PEX5.</text>
</comment>
<comment type="subunit">
    <text evidence="1 3">Interacts (via WxxxF/Y and LVxEF motifs) with PEX14; promoting translocation through the PEX13-PEX14 docking complex (By similarity). Interacts with PEX7, promoting peroxisomal import of proteins containing a C-terminal PTS2-type peroxisomal targeting signal (By similarity).</text>
</comment>
<comment type="subcellular location">
    <subcellularLocation>
        <location evidence="1">Cytoplasm</location>
        <location evidence="1">Cytosol</location>
    </subcellularLocation>
    <subcellularLocation>
        <location evidence="1">Peroxisome matrix</location>
    </subcellularLocation>
    <text evidence="1">Cycles between the cytosol and the peroxisome matrix. Following binding to cargo proteins containing a PTS1 peroxisomal targeting signal in the cytosol, recruited to the docking complex, composed of PEX13 and PEX14, leading to translocation into the peroxisome matrix along with cargo proteins. Export and recycling to the cytosol is initiated by binding to the PEX2-PEX10-PEX12 ligase complex via its unstructured N-terminus that inserts into the ligase pore and emerges in the cytosol. Cys-11 of PEX5 is then monoubiquitinated, promoting its extraction from peroxisomal membrane by the PEX1-PEX6 AAA ATPase complex. Extraction is accompanied by unfolding of the TPR repeats and release of bound cargo in the peroxisome matrix. The TPR repeats refold in the cytosol and ubiquitination is removed by deubiquitinating enzymes, resetting PEX5 for a subsequent import cycle.</text>
</comment>
<comment type="domain">
    <text evidence="1">The TPR repeats mediate interaction with proteins containing a C-terminal PTS1-type tripeptide peroxisomal targeting signal (SKL-type).</text>
</comment>
<comment type="domain">
    <text evidence="1">The WxxxF/Y motifs mediate interaction with PEX14, promoting association with the PEX13-PEX14 docking complex.</text>
</comment>
<comment type="domain">
    <text evidence="1">The amphipathic helix 1 and 2 (AH1 and AH2, respectively) are required for PEX5 retrotranslocation and recycling. AH2 mediates interaction with lumenal side of the PEX2-PEX10-PEX12 ligase complex, while AH1 is required for extraction from peroxisomal membrane by the PEX1-PEX6 AAA ATPase complex.</text>
</comment>
<comment type="PTM">
    <text evidence="1 2">Monoubiquitinated at Cys-11 by PEX2 during PEX5 passage through the retrotranslocation channel (By similarity). Cys-11 monoubiquitination acts as a recognition signal for the PEX1-PEX6 complex and is required for PEX5 extraction and export from peroxisomes. When PEX5 recycling is compromised, polyubiquitinated by PEX10 during its passage through the retrotranslocation channel, leading to its degradation (By similarity).</text>
</comment>
<comment type="similarity">
    <text evidence="4">Belongs to the peroxisomal targeting signal receptor family.</text>
</comment>
<evidence type="ECO:0000250" key="1">
    <source>
        <dbReference type="UniProtKB" id="A0A1L8FDW4"/>
    </source>
</evidence>
<evidence type="ECO:0000250" key="2">
    <source>
        <dbReference type="UniProtKB" id="P35056"/>
    </source>
</evidence>
<evidence type="ECO:0000250" key="3">
    <source>
        <dbReference type="UniProtKB" id="P50542"/>
    </source>
</evidence>
<evidence type="ECO:0000305" key="4"/>
<name>PEX5_CHICK</name>
<reference key="1">
    <citation type="journal article" date="2005" name="Genome Biol.">
        <title>Full-length cDNAs from chicken bursal lymphocytes to facilitate gene function analysis.</title>
        <authorList>
            <person name="Caldwell R.B."/>
            <person name="Kierzek A.M."/>
            <person name="Arakawa H."/>
            <person name="Bezzubov Y."/>
            <person name="Zaim J."/>
            <person name="Fiedler P."/>
            <person name="Kutter S."/>
            <person name="Blagodatski A."/>
            <person name="Kostovska D."/>
            <person name="Koter M."/>
            <person name="Plachy J."/>
            <person name="Carninci P."/>
            <person name="Hayashizaki Y."/>
            <person name="Buerstedde J.-M."/>
        </authorList>
    </citation>
    <scope>NUCLEOTIDE SEQUENCE [LARGE SCALE MRNA]</scope>
    <source>
        <strain>CB</strain>
        <tissue>Bursa of Fabricius</tissue>
    </source>
</reference>
<feature type="chain" id="PRO_0000284882" description="Peroxisomal targeting signal 1 receptor">
    <location>
        <begin position="1"/>
        <end position="645"/>
    </location>
</feature>
<feature type="repeat" description="TPR 1">
    <location>
        <begin position="340"/>
        <end position="373"/>
    </location>
</feature>
<feature type="repeat" description="TPR 2">
    <location>
        <begin position="375"/>
        <end position="407"/>
    </location>
</feature>
<feature type="repeat" description="TPR 3">
    <location>
        <begin position="408"/>
        <end position="441"/>
    </location>
</feature>
<feature type="repeat" description="TPR 4">
    <location>
        <begin position="459"/>
        <end position="491"/>
    </location>
</feature>
<feature type="repeat" description="TPR 5">
    <location>
        <begin position="494"/>
        <end position="527"/>
    </location>
</feature>
<feature type="repeat" description="TPR 6">
    <location>
        <begin position="529"/>
        <end position="561"/>
    </location>
</feature>
<feature type="repeat" description="TPR 7">
    <location>
        <begin position="563"/>
        <end position="595"/>
    </location>
</feature>
<feature type="region of interest" description="Amphipathic helix 1 (AH1)" evidence="1">
    <location>
        <begin position="11"/>
        <end position="33"/>
    </location>
</feature>
<feature type="region of interest" description="Amphipathic helix 2 (AH2)" evidence="1">
    <location>
        <begin position="82"/>
        <end position="100"/>
    </location>
</feature>
<feature type="region of interest" description="Amphipathic helix 3 (AH3)" evidence="1">
    <location>
        <begin position="193"/>
        <end position="209"/>
    </location>
</feature>
<feature type="region of interest" description="Amphipathic helix 4 (AH4)" evidence="1">
    <location>
        <begin position="289"/>
        <end position="305"/>
    </location>
</feature>
<feature type="short sequence motif" description="LVxEF motif" evidence="3">
    <location>
        <begin position="63"/>
        <end position="67"/>
    </location>
</feature>
<feature type="short sequence motif" description="WxxxF/Y motif 1" evidence="1">
    <location>
        <begin position="119"/>
        <end position="123"/>
    </location>
</feature>
<feature type="short sequence motif" description="WxxxF/Y motif 2" evidence="1">
    <location>
        <begin position="142"/>
        <end position="146"/>
    </location>
</feature>
<feature type="short sequence motif" description="WxxxF/Y motif 3" evidence="1">
    <location>
        <begin position="161"/>
        <end position="165"/>
    </location>
</feature>
<feature type="short sequence motif" description="WxxxF/Y motif 4" evidence="1">
    <location>
        <begin position="187"/>
        <end position="191"/>
    </location>
</feature>
<feature type="short sequence motif" description="WxxxF/Y motif 5" evidence="1">
    <location>
        <begin position="248"/>
        <end position="252"/>
    </location>
</feature>
<feature type="short sequence motif" description="WxxxF/Y motif 6" evidence="1">
    <location>
        <begin position="262"/>
        <end position="266"/>
    </location>
</feature>
<feature type="short sequence motif" description="WxxxF/Y motif 7" evidence="1">
    <location>
        <begin position="313"/>
        <end position="317"/>
    </location>
</feature>
<feature type="cross-link" description="Glycyl cysteine thioester (Cys-Gly) (interchain with G-Cter in ubiquitin)" evidence="3">
    <location>
        <position position="11"/>
    </location>
</feature>
<accession>Q5ZMQ9</accession>
<dbReference type="EMBL" id="AJ719325">
    <property type="protein sequence ID" value="CAG30984.1"/>
    <property type="molecule type" value="mRNA"/>
</dbReference>
<dbReference type="RefSeq" id="NP_001012836.1">
    <property type="nucleotide sequence ID" value="NM_001012818.2"/>
</dbReference>
<dbReference type="SMR" id="Q5ZMQ9"/>
<dbReference type="FunCoup" id="Q5ZMQ9">
    <property type="interactions" value="199"/>
</dbReference>
<dbReference type="STRING" id="9031.ENSGALP00000043616"/>
<dbReference type="PaxDb" id="9031-ENSGALP00000023615"/>
<dbReference type="GeneID" id="418299"/>
<dbReference type="KEGG" id="gga:418299"/>
<dbReference type="CTD" id="5830"/>
<dbReference type="VEuPathDB" id="HostDB:geneid_418299"/>
<dbReference type="eggNOG" id="KOG1125">
    <property type="taxonomic scope" value="Eukaryota"/>
</dbReference>
<dbReference type="InParanoid" id="Q5ZMQ9"/>
<dbReference type="OrthoDB" id="10006023at2759"/>
<dbReference type="PhylomeDB" id="Q5ZMQ9"/>
<dbReference type="PRO" id="PR:Q5ZMQ9"/>
<dbReference type="Proteomes" id="UP000000539">
    <property type="component" value="Unassembled WGS sequence"/>
</dbReference>
<dbReference type="GO" id="GO:0005829">
    <property type="term" value="C:cytosol"/>
    <property type="evidence" value="ECO:0000250"/>
    <property type="project" value="UniProtKB"/>
</dbReference>
<dbReference type="GO" id="GO:0005782">
    <property type="term" value="C:peroxisomal matrix"/>
    <property type="evidence" value="ECO:0000250"/>
    <property type="project" value="UniProtKB"/>
</dbReference>
<dbReference type="GO" id="GO:0005778">
    <property type="term" value="C:peroxisomal membrane"/>
    <property type="evidence" value="ECO:0000318"/>
    <property type="project" value="GO_Central"/>
</dbReference>
<dbReference type="GO" id="GO:0005052">
    <property type="term" value="F:peroxisome matrix targeting signal-1 binding"/>
    <property type="evidence" value="ECO:0000250"/>
    <property type="project" value="UniProtKB"/>
</dbReference>
<dbReference type="GO" id="GO:0140597">
    <property type="term" value="F:protein carrier chaperone"/>
    <property type="evidence" value="ECO:0000250"/>
    <property type="project" value="UniProtKB"/>
</dbReference>
<dbReference type="GO" id="GO:0000425">
    <property type="term" value="P:pexophagy"/>
    <property type="evidence" value="ECO:0000250"/>
    <property type="project" value="UniProtKB"/>
</dbReference>
<dbReference type="GO" id="GO:0016558">
    <property type="term" value="P:protein import into peroxisome matrix"/>
    <property type="evidence" value="ECO:0000250"/>
    <property type="project" value="UniProtKB"/>
</dbReference>
<dbReference type="GO" id="GO:0016560">
    <property type="term" value="P:protein import into peroxisome matrix, docking"/>
    <property type="evidence" value="ECO:0000318"/>
    <property type="project" value="GO_Central"/>
</dbReference>
<dbReference type="GO" id="GO:0016562">
    <property type="term" value="P:protein import into peroxisome matrix, receptor recycling"/>
    <property type="evidence" value="ECO:0000250"/>
    <property type="project" value="UniProtKB"/>
</dbReference>
<dbReference type="GO" id="GO:0044721">
    <property type="term" value="P:protein import into peroxisome matrix, substrate release"/>
    <property type="evidence" value="ECO:0000250"/>
    <property type="project" value="UniProtKB"/>
</dbReference>
<dbReference type="FunFam" id="1.25.40.10:FF:000034">
    <property type="entry name" value="Peroxisomal biogenesis factor 5 isoform 1"/>
    <property type="match status" value="1"/>
</dbReference>
<dbReference type="Gene3D" id="1.25.40.10">
    <property type="entry name" value="Tetratricopeptide repeat domain"/>
    <property type="match status" value="1"/>
</dbReference>
<dbReference type="InterPro" id="IPR024111">
    <property type="entry name" value="PEX5/PEX5L"/>
</dbReference>
<dbReference type="InterPro" id="IPR011990">
    <property type="entry name" value="TPR-like_helical_dom_sf"/>
</dbReference>
<dbReference type="InterPro" id="IPR019734">
    <property type="entry name" value="TPR_rpt"/>
</dbReference>
<dbReference type="PANTHER" id="PTHR10130:SF2">
    <property type="entry name" value="PEROXISOMAL TARGETING SIGNAL 1 RECEPTOR"/>
    <property type="match status" value="1"/>
</dbReference>
<dbReference type="PANTHER" id="PTHR10130">
    <property type="entry name" value="PEROXISOMAL TARGETING SIGNAL 1 RECEPTOR PEX5"/>
    <property type="match status" value="1"/>
</dbReference>
<dbReference type="Pfam" id="PF13432">
    <property type="entry name" value="TPR_16"/>
    <property type="match status" value="2"/>
</dbReference>
<dbReference type="SMART" id="SM00028">
    <property type="entry name" value="TPR"/>
    <property type="match status" value="5"/>
</dbReference>
<dbReference type="SUPFAM" id="SSF48452">
    <property type="entry name" value="TPR-like"/>
    <property type="match status" value="1"/>
</dbReference>
<dbReference type="PROSITE" id="PS50005">
    <property type="entry name" value="TPR"/>
    <property type="match status" value="5"/>
</dbReference>
<dbReference type="PROSITE" id="PS50293">
    <property type="entry name" value="TPR_REGION"/>
    <property type="match status" value="1"/>
</dbReference>
<sequence length="645" mass="71791">MAMRELVEPECGGSNPLLKLAGHFTQDKALRQEGLQGSLGWPPGAAGAAAVSKPLGVASEDELVGEFLQGQNAPLLSHAPQTLRWMTCWLRCKRLNSPAFRQAPQRAPGVAALALSENWTQEFLAAADTAGDVSSDYNEADWSQEFIAEVTDPLSVSPAKWAEEYLEQSEEKLWLGESEDQSLADKWYEEYQPEDDLKKTASDFLSKVDDPKLNSSEFLKFVRQIGDGRVSIEANQVTHRDQDQAEQWATEFMQQQGSSDAWVDQFARSGNLSALDTEFEQAKTAVESDVDFWDKLQAEWEEMAKRDAEAHPWLTDYDDLSSSSYDKGYQFEEDNPMRDHPDAFEEGRKRLEEGDLPNAVLLFEAAVQQKPDHMEAWQYLGTTQAENEQELLAISALRRCLELQPGNLTALMALAVSFTNESLQKQACETLRDWLHHKPAYAHLLEKAPEENASETNLGTSKRVLGSLLSDSLFVEVKELFLAAVRSNPSTVDPDVQCGLGVLFNLSGEYEKAVDCFSAALSVRPNDHLLWNKLGATLANGNRSEEAVAAYRRALELQPGYIRSRYNLGISCINLGAHREAVEHFLEALHMQQKSRGPRGQQGAMSDNIWSTLRMALSMLGQSDLYGAADAHDLPTLLQAFGLQQ</sequence>